<proteinExistence type="evidence at protein level"/>
<accession>A0A3G9GNJ4</accession>
<feature type="chain" id="PRO_0000449133" description="6-hydroxymellein 5-farnesyltransferase cdmH">
    <location>
        <begin position="1"/>
        <end position="325"/>
    </location>
</feature>
<feature type="transmembrane region" description="Helical" evidence="2">
    <location>
        <begin position="60"/>
        <end position="80"/>
    </location>
</feature>
<feature type="transmembrane region" description="Helical" evidence="2">
    <location>
        <begin position="113"/>
        <end position="133"/>
    </location>
</feature>
<feature type="transmembrane region" description="Helical" evidence="2">
    <location>
        <begin position="138"/>
        <end position="158"/>
    </location>
</feature>
<feature type="transmembrane region" description="Helical" evidence="2">
    <location>
        <begin position="169"/>
        <end position="189"/>
    </location>
</feature>
<feature type="transmembrane region" description="Helical" evidence="2">
    <location>
        <begin position="192"/>
        <end position="212"/>
    </location>
</feature>
<feature type="transmembrane region" description="Helical" evidence="2">
    <location>
        <begin position="243"/>
        <end position="263"/>
    </location>
</feature>
<feature type="transmembrane region" description="Helical" evidence="2">
    <location>
        <begin position="267"/>
        <end position="287"/>
    </location>
</feature>
<feature type="transmembrane region" description="Helical" evidence="2">
    <location>
        <begin position="295"/>
        <end position="315"/>
    </location>
</feature>
<feature type="glycosylation site" description="N-linked (GlcNAc...) asparagine" evidence="3">
    <location>
        <position position="214"/>
    </location>
</feature>
<gene>
    <name evidence="7" type="primary">cdmH</name>
</gene>
<dbReference type="EC" id="2.5.1.-" evidence="6"/>
<dbReference type="EMBL" id="LC422696">
    <property type="protein sequence ID" value="BBG28487.1"/>
    <property type="molecule type" value="Genomic_DNA"/>
</dbReference>
<dbReference type="SMR" id="A0A3G9GNJ4"/>
<dbReference type="GlyCosmos" id="A0A3G9GNJ4">
    <property type="glycosylation" value="1 site, No reported glycans"/>
</dbReference>
<dbReference type="UniPathway" id="UPA00213"/>
<dbReference type="GO" id="GO:0005886">
    <property type="term" value="C:plasma membrane"/>
    <property type="evidence" value="ECO:0007669"/>
    <property type="project" value="TreeGrafter"/>
</dbReference>
<dbReference type="GO" id="GO:0016765">
    <property type="term" value="F:transferase activity, transferring alkyl or aryl (other than methyl) groups"/>
    <property type="evidence" value="ECO:0007669"/>
    <property type="project" value="InterPro"/>
</dbReference>
<dbReference type="GO" id="GO:0016114">
    <property type="term" value="P:terpenoid biosynthetic process"/>
    <property type="evidence" value="ECO:0007669"/>
    <property type="project" value="UniProtKB-UniPathway"/>
</dbReference>
<dbReference type="FunFam" id="1.10.357.140:FF:000008">
    <property type="entry name" value="4-hydroxybenzoate octaprenyltransferase"/>
    <property type="match status" value="1"/>
</dbReference>
<dbReference type="Gene3D" id="1.10.357.140">
    <property type="entry name" value="UbiA prenyltransferase"/>
    <property type="match status" value="1"/>
</dbReference>
<dbReference type="Gene3D" id="1.20.120.1780">
    <property type="entry name" value="UbiA prenyltransferase"/>
    <property type="match status" value="1"/>
</dbReference>
<dbReference type="InterPro" id="IPR039653">
    <property type="entry name" value="Prenyltransferase"/>
</dbReference>
<dbReference type="InterPro" id="IPR000537">
    <property type="entry name" value="UbiA_prenyltransferase"/>
</dbReference>
<dbReference type="InterPro" id="IPR030470">
    <property type="entry name" value="UbiA_prenylTrfase_CS"/>
</dbReference>
<dbReference type="InterPro" id="IPR044878">
    <property type="entry name" value="UbiA_sf"/>
</dbReference>
<dbReference type="PANTHER" id="PTHR11048:SF28">
    <property type="entry name" value="4-HYDROXYBENZOATE POLYPRENYLTRANSFERASE, MITOCHONDRIAL"/>
    <property type="match status" value="1"/>
</dbReference>
<dbReference type="PANTHER" id="PTHR11048">
    <property type="entry name" value="PRENYLTRANSFERASES"/>
    <property type="match status" value="1"/>
</dbReference>
<dbReference type="Pfam" id="PF01040">
    <property type="entry name" value="UbiA"/>
    <property type="match status" value="1"/>
</dbReference>
<dbReference type="PROSITE" id="PS00943">
    <property type="entry name" value="UBIA"/>
    <property type="match status" value="1"/>
</dbReference>
<organism>
    <name type="scientific">Talaromyces verruculosus</name>
    <name type="common">Penicillium verruculosum</name>
    <dbReference type="NCBI Taxonomy" id="198730"/>
    <lineage>
        <taxon>Eukaryota</taxon>
        <taxon>Fungi</taxon>
        <taxon>Dikarya</taxon>
        <taxon>Ascomycota</taxon>
        <taxon>Pezizomycotina</taxon>
        <taxon>Eurotiomycetes</taxon>
        <taxon>Eurotiomycetidae</taxon>
        <taxon>Eurotiales</taxon>
        <taxon>Trichocomaceae</taxon>
        <taxon>Talaromyces</taxon>
        <taxon>Talaromyces sect. Talaromyces</taxon>
    </lineage>
</organism>
<reference key="1">
    <citation type="journal article" date="2018" name="Org. Lett.">
        <title>Elucidation and heterologous reconstitution of chrodrimanin B biosynthesis.</title>
        <authorList>
            <person name="Bai T."/>
            <person name="Quan Z."/>
            <person name="Zhai R."/>
            <person name="Awakawa T."/>
            <person name="Matsuda Y."/>
            <person name="Abe I."/>
        </authorList>
    </citation>
    <scope>NUCLEOTIDE SEQUENCE [GENOMIC DNA]</scope>
    <scope>FUNCTION</scope>
    <scope>CATALYTIC ACTIVITY</scope>
    <scope>PATHWAY</scope>
    <source>
        <strain>TPU1311</strain>
    </source>
</reference>
<reference key="2">
    <citation type="journal article" date="2015" name="Bioorg. Med. Chem. Lett.">
        <title>Verruculides A and B, two new protein tyrosine phosphatase 1B inhibitors from an Indonesian ascidian-derived Penicillium verruculosum.</title>
        <authorList>
            <person name="Yamazaki H."/>
            <person name="Nakayama W."/>
            <person name="Takahashi O."/>
            <person name="Kirikoshi R."/>
            <person name="Izumikawa Y."/>
            <person name="Iwasaki K."/>
            <person name="Toraiwa K."/>
            <person name="Ukai K."/>
            <person name="Rotinsulu H."/>
            <person name="Wewengkang D.S."/>
            <person name="Sumilat D.A."/>
            <person name="Mangindaan R.E."/>
            <person name="Namikoshi M."/>
        </authorList>
    </citation>
    <scope>BIOTECHNOLOGY</scope>
</reference>
<reference key="3">
    <citation type="journal article" date="2015" name="PLoS ONE">
        <title>Meroterpenoid Chrodrimanins Are Selective and Potent Blockers of Insect GABA-Gated Chloride Channels.</title>
        <authorList>
            <person name="Xu Y."/>
            <person name="Furutani S."/>
            <person name="Ihara M."/>
            <person name="Ling Y."/>
            <person name="Yang X."/>
            <person name="Kai K."/>
            <person name="Hayashi H."/>
            <person name="Matsuda K."/>
        </authorList>
    </citation>
    <scope>BIOTECHNOLOGY</scope>
</reference>
<sequence>MAVLKQPQHHHGKHGGRSFYQLIAYLMLTSRLDNYGMLFTSFGGAGIYKSQDYTSTTSQASILRLAGLCTAHCVLLGAAGNTWNDWMDRDIDSKVARTKDRPLASGKISSGEAFTWMAFLYSTSVGMLKAMLGDRNVWPFMVPLTAIILVYPLGKRPIARKLRIYPQYLLGIAVGYPTMYGWAAVYGPCMPISEILHRCVPLWIFLFFWSFYANTSYSYQDVEDDRKMKVNSAYNLAGKRIRALLAILASIALSTIPFVLRPFSSAWLWLSWVGAWVPGIIQQLLSFDPSKPESGGVLHLSTVKLGLWTVFACTLELYLSNRAVI</sequence>
<comment type="function">
    <text evidence="6 9">6-hydroxymellein 5-farnesyltransferase; part of the gene cluster that mediates the biosynthesis of chrodrimanin B, a meroterpenoid that acts as a potent blocker of insect GABA-gated chloride channels (PubMed:30417647). The first step of the pathway is the biosynthesis of 6-hydroxymellein by the polyketide synthase cdmE (PubMed:30417647). The prenyltransferase cdmH acts as a 6-hydroxymellein 5-farnesyltransferase and produces the hydrophobic metabolite verruculide C (PubMed:30417647). The FAD-dependent monooxygenase cdmI further converts verruculide C into verruculide B (PubMed:30417647). The terpene cyclase cdmG then produced the pentacyclic molecule 3-hydroxypentacecilide A, the backbone structure of chrodrimanin B, via folding the farnesyl moiety of the substrate into the chair-boat conformation (PubMed:30417647). The short-chain dehydrogenase/reductase cdmF functions as the 3-OH dehydrogenase that oxidizes the C-3 hydroxyl group of 3-hydroxypentacecilide A and produces chrodrimanin C, the dehydrogenated product of 3-hydroxypentacecilide A (PubMed:30417647). The cytochrome P450 monooxygenase cdmJ then accepts both 3-hydroxypentacecilide A and chrodrimanin C and functions as a C-7-beta-hydroxylase to produce respectively chrodrimanin H and chrodrimanin F (PubMed:30417647). The dioxygenase cdmA accepts chrodrimanin H to afford chrodrimanin E, which is further transformed to chrodrimanin A by the dioxygenase cdmD (PubMed:30417647). CdmA can also accept chrodrimanin C as substrate to convert it into verruculide A, which is further converted into chrodrimanin T by cdmD (PubMed:30417647). The last step of the biosynthesis is proposed to be performed by the acetyltransferase cdmC which acetylates chrodrimanin A to yield chrodrimanin B (Probable). The pathway may also lead to the production of additional shunt products, including chrodrimanins T and U (PubMed:30417647).</text>
</comment>
<comment type="catalytic activity">
    <reaction evidence="6">
        <text>6-hydroxymellein + (2E,6E)-farnesyl diphosphate = verruculide C + diphosphate</text>
        <dbReference type="Rhea" id="RHEA:65252"/>
        <dbReference type="ChEBI" id="CHEBI:16368"/>
        <dbReference type="ChEBI" id="CHEBI:33019"/>
        <dbReference type="ChEBI" id="CHEBI:156409"/>
        <dbReference type="ChEBI" id="CHEBI:175763"/>
    </reaction>
    <physiologicalReaction direction="left-to-right" evidence="6">
        <dbReference type="Rhea" id="RHEA:65253"/>
    </physiologicalReaction>
</comment>
<comment type="cofactor">
    <cofactor evidence="1">
        <name>Mg(2+)</name>
        <dbReference type="ChEBI" id="CHEBI:18420"/>
    </cofactor>
</comment>
<comment type="pathway">
    <text evidence="6">Secondary metabolite biosynthesis; terpenoid biosynthesis.</text>
</comment>
<comment type="subcellular location">
    <subcellularLocation>
        <location evidence="2">Membrane</location>
        <topology evidence="2">Multi-pass membrane protein</topology>
    </subcellularLocation>
</comment>
<comment type="biotechnology">
    <text evidence="4 5">Compounds in the chrodrimanin family such as chrodrimanin A or verruculide A exhibit strong inhibitory activities against protein tyrosine phosphatase 1B (PTP1B) and therefore, they could potentially be developed into drugs for the treatment of type 2 diabetes or obesity (PubMed:26115570). Furthermore, chrodrimanin B, the end product of the pathway involving chrodrimanin A or verruculide A, does not exhibit the PTP1B inhibitory activity, while it functions as a potent blocker of insect GABA-gated chloride channels (PubMed:25902139).</text>
</comment>
<comment type="similarity">
    <text evidence="8">Belongs to the UbiA prenyltransferase family.</text>
</comment>
<name>CDMH_TALVE</name>
<keyword id="KW-0325">Glycoprotein</keyword>
<keyword id="KW-0460">Magnesium</keyword>
<keyword id="KW-0472">Membrane</keyword>
<keyword id="KW-0808">Transferase</keyword>
<keyword id="KW-0812">Transmembrane</keyword>
<keyword id="KW-1133">Transmembrane helix</keyword>
<evidence type="ECO:0000250" key="1">
    <source>
        <dbReference type="UniProtKB" id="P32378"/>
    </source>
</evidence>
<evidence type="ECO:0000255" key="2"/>
<evidence type="ECO:0000255" key="3">
    <source>
        <dbReference type="PROSITE-ProRule" id="PRU00498"/>
    </source>
</evidence>
<evidence type="ECO:0000269" key="4">
    <source>
    </source>
</evidence>
<evidence type="ECO:0000269" key="5">
    <source>
    </source>
</evidence>
<evidence type="ECO:0000269" key="6">
    <source>
    </source>
</evidence>
<evidence type="ECO:0000303" key="7">
    <source>
    </source>
</evidence>
<evidence type="ECO:0000305" key="8"/>
<evidence type="ECO:0000305" key="9">
    <source>
    </source>
</evidence>
<protein>
    <recommendedName>
        <fullName evidence="7">6-hydroxymellein 5-farnesyltransferase cdmH</fullName>
    </recommendedName>
    <alternativeName>
        <fullName evidence="7">Polyprenyl transferase cdmH</fullName>
        <ecNumber evidence="6">2.5.1.-</ecNumber>
    </alternativeName>
    <alternativeName>
        <fullName evidence="7">chrodrimanin B biosynthesis cluster protein H</fullName>
    </alternativeName>
</protein>